<proteinExistence type="inferred from homology"/>
<feature type="chain" id="PRO_1000007276" description="Large ribosomal subunit protein bL28">
    <location>
        <begin position="1"/>
        <end position="78"/>
    </location>
</feature>
<dbReference type="EMBL" id="CP000284">
    <property type="protein sequence ID" value="ABE48583.1"/>
    <property type="molecule type" value="Genomic_DNA"/>
</dbReference>
<dbReference type="RefSeq" id="WP_011478680.1">
    <property type="nucleotide sequence ID" value="NC_007947.1"/>
</dbReference>
<dbReference type="SMR" id="Q1H4K4"/>
<dbReference type="STRING" id="265072.Mfla_0312"/>
<dbReference type="KEGG" id="mfa:Mfla_0312"/>
<dbReference type="eggNOG" id="COG0227">
    <property type="taxonomic scope" value="Bacteria"/>
</dbReference>
<dbReference type="HOGENOM" id="CLU_064548_3_1_4"/>
<dbReference type="OrthoDB" id="9805609at2"/>
<dbReference type="Proteomes" id="UP000002440">
    <property type="component" value="Chromosome"/>
</dbReference>
<dbReference type="GO" id="GO:0022625">
    <property type="term" value="C:cytosolic large ribosomal subunit"/>
    <property type="evidence" value="ECO:0007669"/>
    <property type="project" value="TreeGrafter"/>
</dbReference>
<dbReference type="GO" id="GO:0003735">
    <property type="term" value="F:structural constituent of ribosome"/>
    <property type="evidence" value="ECO:0007669"/>
    <property type="project" value="InterPro"/>
</dbReference>
<dbReference type="GO" id="GO:0006412">
    <property type="term" value="P:translation"/>
    <property type="evidence" value="ECO:0007669"/>
    <property type="project" value="UniProtKB-UniRule"/>
</dbReference>
<dbReference type="FunFam" id="2.30.170.40:FF:000001">
    <property type="entry name" value="50S ribosomal protein L28"/>
    <property type="match status" value="1"/>
</dbReference>
<dbReference type="Gene3D" id="2.30.170.40">
    <property type="entry name" value="Ribosomal protein L28/L24"/>
    <property type="match status" value="1"/>
</dbReference>
<dbReference type="HAMAP" id="MF_00373">
    <property type="entry name" value="Ribosomal_bL28"/>
    <property type="match status" value="1"/>
</dbReference>
<dbReference type="InterPro" id="IPR026569">
    <property type="entry name" value="Ribosomal_bL28"/>
</dbReference>
<dbReference type="InterPro" id="IPR034704">
    <property type="entry name" value="Ribosomal_bL28/bL31-like_sf"/>
</dbReference>
<dbReference type="InterPro" id="IPR001383">
    <property type="entry name" value="Ribosomal_bL28_bact-type"/>
</dbReference>
<dbReference type="InterPro" id="IPR037147">
    <property type="entry name" value="Ribosomal_bL28_sf"/>
</dbReference>
<dbReference type="NCBIfam" id="TIGR00009">
    <property type="entry name" value="L28"/>
    <property type="match status" value="1"/>
</dbReference>
<dbReference type="PANTHER" id="PTHR13528">
    <property type="entry name" value="39S RIBOSOMAL PROTEIN L28, MITOCHONDRIAL"/>
    <property type="match status" value="1"/>
</dbReference>
<dbReference type="PANTHER" id="PTHR13528:SF2">
    <property type="entry name" value="LARGE RIBOSOMAL SUBUNIT PROTEIN BL28M"/>
    <property type="match status" value="1"/>
</dbReference>
<dbReference type="Pfam" id="PF00830">
    <property type="entry name" value="Ribosomal_L28"/>
    <property type="match status" value="1"/>
</dbReference>
<dbReference type="SUPFAM" id="SSF143800">
    <property type="entry name" value="L28p-like"/>
    <property type="match status" value="1"/>
</dbReference>
<protein>
    <recommendedName>
        <fullName evidence="1">Large ribosomal subunit protein bL28</fullName>
    </recommendedName>
    <alternativeName>
        <fullName evidence="2">50S ribosomal protein L28</fullName>
    </alternativeName>
</protein>
<keyword id="KW-1185">Reference proteome</keyword>
<keyword id="KW-0687">Ribonucleoprotein</keyword>
<keyword id="KW-0689">Ribosomal protein</keyword>
<reference key="1">
    <citation type="submission" date="2006-03" db="EMBL/GenBank/DDBJ databases">
        <title>Complete sequence of Methylobacillus flagellatus KT.</title>
        <authorList>
            <consortium name="US DOE Joint Genome Institute"/>
            <person name="Copeland A."/>
            <person name="Lucas S."/>
            <person name="Lapidus A."/>
            <person name="Barry K."/>
            <person name="Detter J.C."/>
            <person name="Glavina del Rio T."/>
            <person name="Hammon N."/>
            <person name="Israni S."/>
            <person name="Dalin E."/>
            <person name="Tice H."/>
            <person name="Pitluck S."/>
            <person name="Brettin T."/>
            <person name="Bruce D."/>
            <person name="Han C."/>
            <person name="Tapia R."/>
            <person name="Saunders E."/>
            <person name="Gilna P."/>
            <person name="Schmutz J."/>
            <person name="Larimer F."/>
            <person name="Land M."/>
            <person name="Kyrpides N."/>
            <person name="Anderson I."/>
            <person name="Richardson P."/>
        </authorList>
    </citation>
    <scope>NUCLEOTIDE SEQUENCE [LARGE SCALE GENOMIC DNA]</scope>
    <source>
        <strain>ATCC 51484 / DSM 6875 / VKM B-1610 / KT</strain>
    </source>
</reference>
<evidence type="ECO:0000255" key="1">
    <source>
        <dbReference type="HAMAP-Rule" id="MF_00373"/>
    </source>
</evidence>
<evidence type="ECO:0000305" key="2"/>
<organism>
    <name type="scientific">Methylobacillus flagellatus (strain ATCC 51484 / DSM 6875 / VKM B-1610 / KT)</name>
    <dbReference type="NCBI Taxonomy" id="265072"/>
    <lineage>
        <taxon>Bacteria</taxon>
        <taxon>Pseudomonadati</taxon>
        <taxon>Pseudomonadota</taxon>
        <taxon>Betaproteobacteria</taxon>
        <taxon>Nitrosomonadales</taxon>
        <taxon>Methylophilaceae</taxon>
        <taxon>Methylobacillus</taxon>
    </lineage>
</organism>
<sequence length="78" mass="8848">MARVCQVTGKKPMVGNNVSHANNKTKRRFLPNLQNRKFWVESENRWVSLRITNAALRTIDKNGIDAVLADLRASGEKI</sequence>
<name>RL28_METFK</name>
<accession>Q1H4K4</accession>
<comment type="similarity">
    <text evidence="1">Belongs to the bacterial ribosomal protein bL28 family.</text>
</comment>
<gene>
    <name evidence="1" type="primary">rpmB</name>
    <name type="ordered locus">Mfla_0312</name>
</gene>